<feature type="chain" id="PRO_0000124499" description="Small ribosomal subunit protein uS7c">
    <location>
        <begin position="1"/>
        <end position="155"/>
    </location>
</feature>
<evidence type="ECO:0000250" key="1"/>
<evidence type="ECO:0000305" key="2"/>
<name>RR7_SARHE</name>
<proteinExistence type="inferred from homology"/>
<comment type="function">
    <text evidence="1">One of the primary rRNA binding proteins, it binds directly to 16S rRNA where it nucleates assembly of the head domain of the 30S subunit.</text>
</comment>
<comment type="subunit">
    <text>Part of the 30S ribosomal subunit.</text>
</comment>
<comment type="subcellular location">
    <subcellularLocation>
        <location>Plastid</location>
        <location>Chloroplast</location>
    </subcellularLocation>
</comment>
<comment type="similarity">
    <text evidence="2">Belongs to the universal ribosomal protein uS7 family.</text>
</comment>
<gene>
    <name type="primary">rps7</name>
</gene>
<protein>
    <recommendedName>
        <fullName evidence="2">Small ribosomal subunit protein uS7c</fullName>
    </recommendedName>
    <alternativeName>
        <fullName>30S ribosomal protein S7, chloroplastic</fullName>
    </alternativeName>
</protein>
<reference key="1">
    <citation type="submission" date="2003-02" db="EMBL/GenBank/DDBJ databases">
        <title>Parsing out signal and noise for seed-plant phylogenetic inference.</title>
        <authorList>
            <person name="Graham S.W."/>
            <person name="Rai H.S."/>
            <person name="Ikegami K."/>
            <person name="Reeves P.A."/>
            <person name="Olmstead R.G."/>
        </authorList>
    </citation>
    <scope>NUCLEOTIDE SEQUENCE [GENOMIC DNA]</scope>
</reference>
<accession>Q6EM62</accession>
<keyword id="KW-0150">Chloroplast</keyword>
<keyword id="KW-0934">Plastid</keyword>
<keyword id="KW-0687">Ribonucleoprotein</keyword>
<keyword id="KW-0689">Ribosomal protein</keyword>
<keyword id="KW-0694">RNA-binding</keyword>
<keyword id="KW-0699">rRNA-binding</keyword>
<organism>
    <name type="scientific">Saruma henryi</name>
    <name type="common">Upright wild ginger</name>
    <dbReference type="NCBI Taxonomy" id="13258"/>
    <lineage>
        <taxon>Eukaryota</taxon>
        <taxon>Viridiplantae</taxon>
        <taxon>Streptophyta</taxon>
        <taxon>Embryophyta</taxon>
        <taxon>Tracheophyta</taxon>
        <taxon>Spermatophyta</taxon>
        <taxon>Magnoliopsida</taxon>
        <taxon>Magnoliidae</taxon>
        <taxon>Piperales</taxon>
        <taxon>Asaraceae</taxon>
        <taxon>Saruma</taxon>
    </lineage>
</organism>
<sequence>MSRRGTAEEKTAKSDPIYRNRLVNMLVNRILKHGKKSLAYQIIYRAVKKIQQKTETNPLSVLRQAIRGVTPDIAVKARRVGGSTHQVPIEIGSTQGKALAIRWLLGASRKRPGRNMALKLSSELVDAAKGSGDAIRKKEETHRMAEANRAFAHFR</sequence>
<dbReference type="EMBL" id="AY237148">
    <property type="protein sequence ID" value="AAQ64579.1"/>
    <property type="molecule type" value="Genomic_DNA"/>
</dbReference>
<dbReference type="SMR" id="Q6EM62"/>
<dbReference type="GO" id="GO:0009507">
    <property type="term" value="C:chloroplast"/>
    <property type="evidence" value="ECO:0007669"/>
    <property type="project" value="UniProtKB-SubCell"/>
</dbReference>
<dbReference type="GO" id="GO:0015935">
    <property type="term" value="C:small ribosomal subunit"/>
    <property type="evidence" value="ECO:0007669"/>
    <property type="project" value="InterPro"/>
</dbReference>
<dbReference type="GO" id="GO:0019843">
    <property type="term" value="F:rRNA binding"/>
    <property type="evidence" value="ECO:0007669"/>
    <property type="project" value="UniProtKB-UniRule"/>
</dbReference>
<dbReference type="GO" id="GO:0003735">
    <property type="term" value="F:structural constituent of ribosome"/>
    <property type="evidence" value="ECO:0007669"/>
    <property type="project" value="InterPro"/>
</dbReference>
<dbReference type="GO" id="GO:0006412">
    <property type="term" value="P:translation"/>
    <property type="evidence" value="ECO:0007669"/>
    <property type="project" value="UniProtKB-UniRule"/>
</dbReference>
<dbReference type="CDD" id="cd14871">
    <property type="entry name" value="uS7_Chloroplast"/>
    <property type="match status" value="1"/>
</dbReference>
<dbReference type="FunFam" id="1.10.455.10:FF:000001">
    <property type="entry name" value="30S ribosomal protein S7"/>
    <property type="match status" value="1"/>
</dbReference>
<dbReference type="Gene3D" id="1.10.455.10">
    <property type="entry name" value="Ribosomal protein S7 domain"/>
    <property type="match status" value="1"/>
</dbReference>
<dbReference type="HAMAP" id="MF_00480_B">
    <property type="entry name" value="Ribosomal_uS7_B"/>
    <property type="match status" value="1"/>
</dbReference>
<dbReference type="InterPro" id="IPR000235">
    <property type="entry name" value="Ribosomal_uS7"/>
</dbReference>
<dbReference type="InterPro" id="IPR005717">
    <property type="entry name" value="Ribosomal_uS7_bac/org-type"/>
</dbReference>
<dbReference type="InterPro" id="IPR020606">
    <property type="entry name" value="Ribosomal_uS7_CS"/>
</dbReference>
<dbReference type="InterPro" id="IPR023798">
    <property type="entry name" value="Ribosomal_uS7_dom"/>
</dbReference>
<dbReference type="InterPro" id="IPR036823">
    <property type="entry name" value="Ribosomal_uS7_dom_sf"/>
</dbReference>
<dbReference type="NCBIfam" id="TIGR01029">
    <property type="entry name" value="rpsG_bact"/>
    <property type="match status" value="1"/>
</dbReference>
<dbReference type="PANTHER" id="PTHR11205">
    <property type="entry name" value="RIBOSOMAL PROTEIN S7"/>
    <property type="match status" value="1"/>
</dbReference>
<dbReference type="Pfam" id="PF00177">
    <property type="entry name" value="Ribosomal_S7"/>
    <property type="match status" value="1"/>
</dbReference>
<dbReference type="PIRSF" id="PIRSF002122">
    <property type="entry name" value="RPS7p_RPS7a_RPS5e_RPS7o"/>
    <property type="match status" value="1"/>
</dbReference>
<dbReference type="SUPFAM" id="SSF47973">
    <property type="entry name" value="Ribosomal protein S7"/>
    <property type="match status" value="1"/>
</dbReference>
<dbReference type="PROSITE" id="PS00052">
    <property type="entry name" value="RIBOSOMAL_S7"/>
    <property type="match status" value="1"/>
</dbReference>
<geneLocation type="chloroplast"/>